<organism>
    <name type="scientific">Yarrowia lipolytica (strain CLIB 122 / E 150)</name>
    <name type="common">Yeast</name>
    <name type="synonym">Candida lipolytica</name>
    <dbReference type="NCBI Taxonomy" id="284591"/>
    <lineage>
        <taxon>Eukaryota</taxon>
        <taxon>Fungi</taxon>
        <taxon>Dikarya</taxon>
        <taxon>Ascomycota</taxon>
        <taxon>Saccharomycotina</taxon>
        <taxon>Dipodascomycetes</taxon>
        <taxon>Dipodascales</taxon>
        <taxon>Dipodascales incertae sedis</taxon>
        <taxon>Yarrowia</taxon>
    </lineage>
</organism>
<dbReference type="EC" id="1.1.1.8"/>
<dbReference type="EMBL" id="AJ250328">
    <property type="protein sequence ID" value="CAB58452.1"/>
    <property type="molecule type" value="Genomic_DNA"/>
</dbReference>
<dbReference type="EMBL" id="CR382128">
    <property type="protein sequence ID" value="CAG82664.1"/>
    <property type="molecule type" value="Genomic_DNA"/>
</dbReference>
<dbReference type="RefSeq" id="XP_500444.1">
    <property type="nucleotide sequence ID" value="XM_500444.1"/>
</dbReference>
<dbReference type="SMR" id="Q9UVF4"/>
<dbReference type="FunCoup" id="Q9UVF4">
    <property type="interactions" value="622"/>
</dbReference>
<dbReference type="STRING" id="284591.Q9UVF4"/>
<dbReference type="EnsemblFungi" id="CAG82664">
    <property type="protein sequence ID" value="CAG82664"/>
    <property type="gene ID" value="YALI0_B02948g"/>
</dbReference>
<dbReference type="KEGG" id="yli:2906777"/>
<dbReference type="VEuPathDB" id="FungiDB:YALI0_B02948g"/>
<dbReference type="HOGENOM" id="CLU_033449_2_2_1"/>
<dbReference type="InParanoid" id="Q9UVF4"/>
<dbReference type="OMA" id="NRMFGNM"/>
<dbReference type="OrthoDB" id="7871at4891"/>
<dbReference type="Proteomes" id="UP000001300">
    <property type="component" value="Chromosome B"/>
</dbReference>
<dbReference type="GO" id="GO:0005829">
    <property type="term" value="C:cytosol"/>
    <property type="evidence" value="ECO:0000318"/>
    <property type="project" value="GO_Central"/>
</dbReference>
<dbReference type="GO" id="GO:0005634">
    <property type="term" value="C:nucleus"/>
    <property type="evidence" value="ECO:0000318"/>
    <property type="project" value="GO_Central"/>
</dbReference>
<dbReference type="GO" id="GO:0141152">
    <property type="term" value="F:glycerol-3-phosphate dehydrogenase (NAD+) activity"/>
    <property type="evidence" value="ECO:0007669"/>
    <property type="project" value="UniProtKB-EC"/>
</dbReference>
<dbReference type="GO" id="GO:0051287">
    <property type="term" value="F:NAD binding"/>
    <property type="evidence" value="ECO:0007669"/>
    <property type="project" value="InterPro"/>
</dbReference>
<dbReference type="GO" id="GO:0042803">
    <property type="term" value="F:protein homodimerization activity"/>
    <property type="evidence" value="ECO:0007669"/>
    <property type="project" value="InterPro"/>
</dbReference>
<dbReference type="GO" id="GO:0005975">
    <property type="term" value="P:carbohydrate metabolic process"/>
    <property type="evidence" value="ECO:0007669"/>
    <property type="project" value="InterPro"/>
</dbReference>
<dbReference type="GO" id="GO:0046168">
    <property type="term" value="P:glycerol-3-phosphate catabolic process"/>
    <property type="evidence" value="ECO:0007669"/>
    <property type="project" value="InterPro"/>
</dbReference>
<dbReference type="GO" id="GO:0006072">
    <property type="term" value="P:glycerol-3-phosphate metabolic process"/>
    <property type="evidence" value="ECO:0000318"/>
    <property type="project" value="GO_Central"/>
</dbReference>
<dbReference type="FunFam" id="1.10.1040.10:FF:000004">
    <property type="entry name" value="Glycerol-3-phosphate dehydrogenase [NAD(+)]"/>
    <property type="match status" value="1"/>
</dbReference>
<dbReference type="Gene3D" id="1.10.1040.10">
    <property type="entry name" value="N-(1-d-carboxylethyl)-l-norvaline Dehydrogenase, domain 2"/>
    <property type="match status" value="1"/>
</dbReference>
<dbReference type="Gene3D" id="3.40.50.720">
    <property type="entry name" value="NAD(P)-binding Rossmann-like Domain"/>
    <property type="match status" value="1"/>
</dbReference>
<dbReference type="InterPro" id="IPR008927">
    <property type="entry name" value="6-PGluconate_DH-like_C_sf"/>
</dbReference>
<dbReference type="InterPro" id="IPR013328">
    <property type="entry name" value="6PGD_dom2"/>
</dbReference>
<dbReference type="InterPro" id="IPR006168">
    <property type="entry name" value="G3P_DH_NAD-dep"/>
</dbReference>
<dbReference type="InterPro" id="IPR006109">
    <property type="entry name" value="G3P_DH_NAD-dep_C"/>
</dbReference>
<dbReference type="InterPro" id="IPR017751">
    <property type="entry name" value="G3P_DH_NAD-dep_euk"/>
</dbReference>
<dbReference type="InterPro" id="IPR011128">
    <property type="entry name" value="G3P_DH_NAD-dep_N"/>
</dbReference>
<dbReference type="InterPro" id="IPR036291">
    <property type="entry name" value="NAD(P)-bd_dom_sf"/>
</dbReference>
<dbReference type="NCBIfam" id="TIGR03376">
    <property type="entry name" value="glycerol3P_DH"/>
    <property type="match status" value="1"/>
</dbReference>
<dbReference type="PANTHER" id="PTHR11728">
    <property type="entry name" value="GLYCEROL-3-PHOSPHATE DEHYDROGENASE"/>
    <property type="match status" value="1"/>
</dbReference>
<dbReference type="PANTHER" id="PTHR11728:SF8">
    <property type="entry name" value="GLYCEROL-3-PHOSPHATE DEHYDROGENASE [NAD(+)]-RELATED"/>
    <property type="match status" value="1"/>
</dbReference>
<dbReference type="Pfam" id="PF07479">
    <property type="entry name" value="NAD_Gly3P_dh_C"/>
    <property type="match status" value="1"/>
</dbReference>
<dbReference type="Pfam" id="PF01210">
    <property type="entry name" value="NAD_Gly3P_dh_N"/>
    <property type="match status" value="1"/>
</dbReference>
<dbReference type="PIRSF" id="PIRSF000114">
    <property type="entry name" value="Glycerol-3-P_dh"/>
    <property type="match status" value="1"/>
</dbReference>
<dbReference type="PRINTS" id="PR00077">
    <property type="entry name" value="GPDHDRGNASE"/>
</dbReference>
<dbReference type="SUPFAM" id="SSF48179">
    <property type="entry name" value="6-phosphogluconate dehydrogenase C-terminal domain-like"/>
    <property type="match status" value="1"/>
</dbReference>
<dbReference type="SUPFAM" id="SSF51735">
    <property type="entry name" value="NAD(P)-binding Rossmann-fold domains"/>
    <property type="match status" value="1"/>
</dbReference>
<dbReference type="PROSITE" id="PS00957">
    <property type="entry name" value="NAD_G3PDH"/>
    <property type="match status" value="1"/>
</dbReference>
<feature type="chain" id="PRO_0000138098" description="Glycerol-3-phosphate dehydrogenase [NAD(+)] 1">
    <location>
        <begin position="1"/>
        <end position="398"/>
    </location>
</feature>
<feature type="active site" description="Proton acceptor" evidence="1">
    <location>
        <position position="253"/>
    </location>
</feature>
<feature type="binding site" evidence="1">
    <location>
        <begin position="50"/>
        <end position="55"/>
    </location>
    <ligand>
        <name>NAD(+)</name>
        <dbReference type="ChEBI" id="CHEBI:57540"/>
    </ligand>
</feature>
<feature type="binding site" evidence="1">
    <location>
        <position position="138"/>
    </location>
    <ligand>
        <name>NAD(+)</name>
        <dbReference type="ChEBI" id="CHEBI:57540"/>
    </ligand>
</feature>
<feature type="binding site" evidence="1">
    <location>
        <position position="161"/>
    </location>
    <ligand>
        <name>NAD(+)</name>
        <dbReference type="ChEBI" id="CHEBI:57540"/>
    </ligand>
</feature>
<feature type="binding site" evidence="1">
    <location>
        <position position="161"/>
    </location>
    <ligand>
        <name>substrate</name>
    </ligand>
</feature>
<feature type="binding site" evidence="1">
    <location>
        <position position="194"/>
    </location>
    <ligand>
        <name>NAD(+)</name>
        <dbReference type="ChEBI" id="CHEBI:57540"/>
    </ligand>
</feature>
<feature type="binding site" evidence="1">
    <location>
        <begin position="318"/>
        <end position="319"/>
    </location>
    <ligand>
        <name>substrate</name>
    </ligand>
</feature>
<feature type="binding site" evidence="1">
    <location>
        <position position="318"/>
    </location>
    <ligand>
        <name>NAD(+)</name>
        <dbReference type="ChEBI" id="CHEBI:57540"/>
    </ligand>
</feature>
<feature type="binding site" evidence="1">
    <location>
        <position position="350"/>
    </location>
    <ligand>
        <name>NAD(+)</name>
        <dbReference type="ChEBI" id="CHEBI:57540"/>
    </ligand>
</feature>
<keyword id="KW-0963">Cytoplasm</keyword>
<keyword id="KW-0520">NAD</keyword>
<keyword id="KW-0560">Oxidoreductase</keyword>
<keyword id="KW-1185">Reference proteome</keyword>
<protein>
    <recommendedName>
        <fullName>Glycerol-3-phosphate dehydrogenase [NAD(+)] 1</fullName>
        <ecNumber>1.1.1.8</ecNumber>
    </recommendedName>
</protein>
<proteinExistence type="inferred from homology"/>
<accession>Q9UVF4</accession>
<evidence type="ECO:0000250" key="1"/>
<evidence type="ECO:0000305" key="2"/>
<gene>
    <name type="primary">GPD1</name>
    <name type="ordered locus">YALI0B02948g</name>
</gene>
<name>GPD1_YARLI</name>
<reference key="1">
    <citation type="submission" date="1999-10" db="EMBL/GenBank/DDBJ databases">
        <title>Glycerol 3 phosphate dehydrogenase from Yarrowia lipolityca.</title>
        <authorList>
            <person name="Nicaud J.-M."/>
            <person name="le Dall M.-T."/>
            <person name="Choquer M."/>
        </authorList>
    </citation>
    <scope>NUCLEOTIDE SEQUENCE [GENOMIC DNA]</scope>
    <source>
        <strain>ATCC 20460 / W29 / CBS 7504 / IFP29</strain>
    </source>
</reference>
<reference key="2">
    <citation type="journal article" date="2004" name="Nature">
        <title>Genome evolution in yeasts.</title>
        <authorList>
            <person name="Dujon B."/>
            <person name="Sherman D."/>
            <person name="Fischer G."/>
            <person name="Durrens P."/>
            <person name="Casaregola S."/>
            <person name="Lafontaine I."/>
            <person name="de Montigny J."/>
            <person name="Marck C."/>
            <person name="Neuveglise C."/>
            <person name="Talla E."/>
            <person name="Goffard N."/>
            <person name="Frangeul L."/>
            <person name="Aigle M."/>
            <person name="Anthouard V."/>
            <person name="Babour A."/>
            <person name="Barbe V."/>
            <person name="Barnay S."/>
            <person name="Blanchin S."/>
            <person name="Beckerich J.-M."/>
            <person name="Beyne E."/>
            <person name="Bleykasten C."/>
            <person name="Boisrame A."/>
            <person name="Boyer J."/>
            <person name="Cattolico L."/>
            <person name="Confanioleri F."/>
            <person name="de Daruvar A."/>
            <person name="Despons L."/>
            <person name="Fabre E."/>
            <person name="Fairhead C."/>
            <person name="Ferry-Dumazet H."/>
            <person name="Groppi A."/>
            <person name="Hantraye F."/>
            <person name="Hennequin C."/>
            <person name="Jauniaux N."/>
            <person name="Joyet P."/>
            <person name="Kachouri R."/>
            <person name="Kerrest A."/>
            <person name="Koszul R."/>
            <person name="Lemaire M."/>
            <person name="Lesur I."/>
            <person name="Ma L."/>
            <person name="Muller H."/>
            <person name="Nicaud J.-M."/>
            <person name="Nikolski M."/>
            <person name="Oztas S."/>
            <person name="Ozier-Kalogeropoulos O."/>
            <person name="Pellenz S."/>
            <person name="Potier S."/>
            <person name="Richard G.-F."/>
            <person name="Straub M.-L."/>
            <person name="Suleau A."/>
            <person name="Swennen D."/>
            <person name="Tekaia F."/>
            <person name="Wesolowski-Louvel M."/>
            <person name="Westhof E."/>
            <person name="Wirth B."/>
            <person name="Zeniou-Meyer M."/>
            <person name="Zivanovic Y."/>
            <person name="Bolotin-Fukuhara M."/>
            <person name="Thierry A."/>
            <person name="Bouchier C."/>
            <person name="Caudron B."/>
            <person name="Scarpelli C."/>
            <person name="Gaillardin C."/>
            <person name="Weissenbach J."/>
            <person name="Wincker P."/>
            <person name="Souciet J.-L."/>
        </authorList>
    </citation>
    <scope>NUCLEOTIDE SEQUENCE [LARGE SCALE GENOMIC DNA]</scope>
    <source>
        <strain>CLIB 122 / E 150</strain>
    </source>
</reference>
<sequence length="398" mass="43459">MSALLRSSLRFKHMSAVNRLTQQLRLLTASAPLSAANTAGKAPFKVAVVGSGNWGTTVAKIVAENCTAHPELFEPEVRVWVREEKVNGKNLTDIFNAEHENVRYLPKIKLPHNLIAEPDLLKAVEGANIIVFNLPHQFLAGVCKQLKGHVNPKARAISCLKGLDVTPQGVYLLSDVIENETGLHCGVLSGANLATEIALEKYSETTVAYNRPKDFFGEGDVTNDVLKALFHRPYFHVRCVQDVAGVSIGGALKNVVALCAGFVEGKNWGDNAKAAIMRRGMLEMINFSKRFFPETDINTLTVESAGVADLITSCAGGRNFKVGRAFGKESGSGKTIQDVEKELLNGQSAQGVITCNEVHELLKNKNMQKDFPLFESTWGIIHGELKIDDLPEILYHAN</sequence>
<comment type="catalytic activity">
    <reaction>
        <text>sn-glycerol 3-phosphate + NAD(+) = dihydroxyacetone phosphate + NADH + H(+)</text>
        <dbReference type="Rhea" id="RHEA:11092"/>
        <dbReference type="ChEBI" id="CHEBI:15378"/>
        <dbReference type="ChEBI" id="CHEBI:57540"/>
        <dbReference type="ChEBI" id="CHEBI:57597"/>
        <dbReference type="ChEBI" id="CHEBI:57642"/>
        <dbReference type="ChEBI" id="CHEBI:57945"/>
        <dbReference type="EC" id="1.1.1.8"/>
    </reaction>
</comment>
<comment type="subcellular location">
    <subcellularLocation>
        <location evidence="2">Cytoplasm</location>
    </subcellularLocation>
</comment>
<comment type="similarity">
    <text evidence="2">Belongs to the NAD-dependent glycerol-3-phosphate dehydrogenase family.</text>
</comment>
<comment type="caution">
    <text evidence="2">It is uncertain whether Met-1 or Met-14 is the initiator.</text>
</comment>